<name>DSBB_METCA</name>
<protein>
    <recommendedName>
        <fullName evidence="1">Disulfide bond formation protein B</fullName>
    </recommendedName>
    <alternativeName>
        <fullName evidence="1">Disulfide oxidoreductase</fullName>
    </alternativeName>
</protein>
<keyword id="KW-0997">Cell inner membrane</keyword>
<keyword id="KW-1003">Cell membrane</keyword>
<keyword id="KW-0143">Chaperone</keyword>
<keyword id="KW-1015">Disulfide bond</keyword>
<keyword id="KW-0249">Electron transport</keyword>
<keyword id="KW-0472">Membrane</keyword>
<keyword id="KW-0560">Oxidoreductase</keyword>
<keyword id="KW-0676">Redox-active center</keyword>
<keyword id="KW-1185">Reference proteome</keyword>
<keyword id="KW-0812">Transmembrane</keyword>
<keyword id="KW-1133">Transmembrane helix</keyword>
<keyword id="KW-0813">Transport</keyword>
<gene>
    <name evidence="1" type="primary">dsbB</name>
    <name type="ordered locus">MCA3059</name>
</gene>
<dbReference type="EMBL" id="AE017282">
    <property type="protein sequence ID" value="AAU90859.1"/>
    <property type="molecule type" value="Genomic_DNA"/>
</dbReference>
<dbReference type="RefSeq" id="WP_010962243.1">
    <property type="nucleotide sequence ID" value="NC_002977.6"/>
</dbReference>
<dbReference type="SMR" id="Q602K4"/>
<dbReference type="STRING" id="243233.MCA3059"/>
<dbReference type="GeneID" id="88225218"/>
<dbReference type="KEGG" id="mca:MCA3059"/>
<dbReference type="eggNOG" id="COG1495">
    <property type="taxonomic scope" value="Bacteria"/>
</dbReference>
<dbReference type="HOGENOM" id="CLU_098660_1_1_6"/>
<dbReference type="Proteomes" id="UP000006821">
    <property type="component" value="Chromosome"/>
</dbReference>
<dbReference type="GO" id="GO:0005886">
    <property type="term" value="C:plasma membrane"/>
    <property type="evidence" value="ECO:0007669"/>
    <property type="project" value="UniProtKB-SubCell"/>
</dbReference>
<dbReference type="GO" id="GO:0009055">
    <property type="term" value="F:electron transfer activity"/>
    <property type="evidence" value="ECO:0007669"/>
    <property type="project" value="UniProtKB-UniRule"/>
</dbReference>
<dbReference type="GO" id="GO:0015035">
    <property type="term" value="F:protein-disulfide reductase activity"/>
    <property type="evidence" value="ECO:0007669"/>
    <property type="project" value="UniProtKB-UniRule"/>
</dbReference>
<dbReference type="GO" id="GO:0006457">
    <property type="term" value="P:protein folding"/>
    <property type="evidence" value="ECO:0007669"/>
    <property type="project" value="InterPro"/>
</dbReference>
<dbReference type="Gene3D" id="1.20.1550.10">
    <property type="entry name" value="DsbB-like"/>
    <property type="match status" value="1"/>
</dbReference>
<dbReference type="HAMAP" id="MF_00286">
    <property type="entry name" value="DsbB"/>
    <property type="match status" value="1"/>
</dbReference>
<dbReference type="InterPro" id="IPR003752">
    <property type="entry name" value="DiS_bond_form_DsbB/BdbC"/>
</dbReference>
<dbReference type="InterPro" id="IPR022920">
    <property type="entry name" value="Disulphide_bond_form_DsbB"/>
</dbReference>
<dbReference type="InterPro" id="IPR050183">
    <property type="entry name" value="DsbB"/>
</dbReference>
<dbReference type="InterPro" id="IPR023380">
    <property type="entry name" value="DsbB-like_sf"/>
</dbReference>
<dbReference type="PANTHER" id="PTHR36570">
    <property type="entry name" value="DISULFIDE BOND FORMATION PROTEIN B"/>
    <property type="match status" value="1"/>
</dbReference>
<dbReference type="PANTHER" id="PTHR36570:SF3">
    <property type="entry name" value="DISULFIDE BOND FORMATION PROTEIN B"/>
    <property type="match status" value="1"/>
</dbReference>
<dbReference type="Pfam" id="PF02600">
    <property type="entry name" value="DsbB"/>
    <property type="match status" value="1"/>
</dbReference>
<dbReference type="SUPFAM" id="SSF158442">
    <property type="entry name" value="DsbB-like"/>
    <property type="match status" value="1"/>
</dbReference>
<reference key="1">
    <citation type="journal article" date="2004" name="PLoS Biol.">
        <title>Genomic insights into methanotrophy: the complete genome sequence of Methylococcus capsulatus (Bath).</title>
        <authorList>
            <person name="Ward N.L."/>
            <person name="Larsen O."/>
            <person name="Sakwa J."/>
            <person name="Bruseth L."/>
            <person name="Khouri H.M."/>
            <person name="Durkin A.S."/>
            <person name="Dimitrov G."/>
            <person name="Jiang L."/>
            <person name="Scanlan D."/>
            <person name="Kang K.H."/>
            <person name="Lewis M.R."/>
            <person name="Nelson K.E."/>
            <person name="Methe B.A."/>
            <person name="Wu M."/>
            <person name="Heidelberg J.F."/>
            <person name="Paulsen I.T."/>
            <person name="Fouts D.E."/>
            <person name="Ravel J."/>
            <person name="Tettelin H."/>
            <person name="Ren Q."/>
            <person name="Read T.D."/>
            <person name="DeBoy R.T."/>
            <person name="Seshadri R."/>
            <person name="Salzberg S.L."/>
            <person name="Jensen H.B."/>
            <person name="Birkeland N.K."/>
            <person name="Nelson W.C."/>
            <person name="Dodson R.J."/>
            <person name="Grindhaug S.H."/>
            <person name="Holt I.E."/>
            <person name="Eidhammer I."/>
            <person name="Jonasen I."/>
            <person name="Vanaken S."/>
            <person name="Utterback T.R."/>
            <person name="Feldblyum T.V."/>
            <person name="Fraser C.M."/>
            <person name="Lillehaug J.R."/>
            <person name="Eisen J.A."/>
        </authorList>
    </citation>
    <scope>NUCLEOTIDE SEQUENCE [LARGE SCALE GENOMIC DNA]</scope>
    <source>
        <strain>ATCC 33009 / NCIMB 11132 / Bath</strain>
    </source>
</reference>
<organism>
    <name type="scientific">Methylococcus capsulatus (strain ATCC 33009 / NCIMB 11132 / Bath)</name>
    <dbReference type="NCBI Taxonomy" id="243233"/>
    <lineage>
        <taxon>Bacteria</taxon>
        <taxon>Pseudomonadati</taxon>
        <taxon>Pseudomonadota</taxon>
        <taxon>Gammaproteobacteria</taxon>
        <taxon>Methylococcales</taxon>
        <taxon>Methylococcaceae</taxon>
        <taxon>Methylococcus</taxon>
    </lineage>
</organism>
<proteinExistence type="inferred from homology"/>
<evidence type="ECO:0000255" key="1">
    <source>
        <dbReference type="HAMAP-Rule" id="MF_00286"/>
    </source>
</evidence>
<feature type="chain" id="PRO_0000298370" description="Disulfide bond formation protein B">
    <location>
        <begin position="1"/>
        <end position="164"/>
    </location>
</feature>
<feature type="topological domain" description="Cytoplasmic" evidence="1">
    <location>
        <begin position="1"/>
        <end position="9"/>
    </location>
</feature>
<feature type="transmembrane region" description="Helical" evidence="1">
    <location>
        <begin position="10"/>
        <end position="26"/>
    </location>
</feature>
<feature type="topological domain" description="Periplasmic" evidence="1">
    <location>
        <begin position="27"/>
        <end position="44"/>
    </location>
</feature>
<feature type="transmembrane region" description="Helical" evidence="1">
    <location>
        <begin position="45"/>
        <end position="61"/>
    </location>
</feature>
<feature type="topological domain" description="Cytoplasmic" evidence="1">
    <location>
        <begin position="62"/>
        <end position="68"/>
    </location>
</feature>
<feature type="transmembrane region" description="Helical" evidence="1">
    <location>
        <begin position="69"/>
        <end position="85"/>
    </location>
</feature>
<feature type="topological domain" description="Periplasmic" evidence="1">
    <location>
        <begin position="86"/>
        <end position="142"/>
    </location>
</feature>
<feature type="transmembrane region" description="Helical" evidence="1">
    <location>
        <begin position="143"/>
        <end position="161"/>
    </location>
</feature>
<feature type="topological domain" description="Cytoplasmic" evidence="1">
    <location>
        <begin position="162"/>
        <end position="164"/>
    </location>
</feature>
<feature type="disulfide bond" description="Redox-active" evidence="1">
    <location>
        <begin position="36"/>
        <end position="39"/>
    </location>
</feature>
<feature type="disulfide bond" description="Redox-active" evidence="1">
    <location>
        <begin position="101"/>
        <end position="128"/>
    </location>
</feature>
<comment type="function">
    <text evidence="1">Required for disulfide bond formation in some periplasmic proteins. Acts by oxidizing the DsbA protein.</text>
</comment>
<comment type="subcellular location">
    <subcellularLocation>
        <location evidence="1">Cell inner membrane</location>
        <topology evidence="1">Multi-pass membrane protein</topology>
    </subcellularLocation>
</comment>
<comment type="similarity">
    <text evidence="1">Belongs to the DsbB family.</text>
</comment>
<accession>Q602K4</accession>
<sequence length="164" mass="17573">MTLPSARTCFLLGFLFCAALLAAALYFQFSGGLEPCPLCISQRIMVLAVALVFLAAAIHHPASLGIRAYALLGTAVALGGASISGRHVWLLHLPPEEVPECGPGLSYMFRNFPLGDTLKAMLSGTGDCAKVDWTFLGLSMPAWVLICFLGLGAFSLLQWWNAER</sequence>